<evidence type="ECO:0000255" key="1">
    <source>
        <dbReference type="HAMAP-Rule" id="MF_00383"/>
    </source>
</evidence>
<evidence type="ECO:0000255" key="2">
    <source>
        <dbReference type="PROSITE-ProRule" id="PRU00469"/>
    </source>
</evidence>
<evidence type="ECO:0000256" key="3">
    <source>
        <dbReference type="SAM" id="MobiDB-lite"/>
    </source>
</evidence>
<keyword id="KW-0479">Metal-binding</keyword>
<keyword id="KW-1185">Reference proteome</keyword>
<keyword id="KW-0677">Repeat</keyword>
<keyword id="KW-0804">Transcription</keyword>
<keyword id="KW-0805">Transcription regulation</keyword>
<keyword id="KW-0862">Zinc</keyword>
<keyword id="KW-0863">Zinc-finger</keyword>
<organism>
    <name type="scientific">Halobacterium salinarum (strain ATCC 700922 / JCM 11081 / NRC-1)</name>
    <name type="common">Halobacterium halobium</name>
    <dbReference type="NCBI Taxonomy" id="64091"/>
    <lineage>
        <taxon>Archaea</taxon>
        <taxon>Methanobacteriati</taxon>
        <taxon>Methanobacteriota</taxon>
        <taxon>Stenosarchaea group</taxon>
        <taxon>Halobacteria</taxon>
        <taxon>Halobacteriales</taxon>
        <taxon>Halobacteriaceae</taxon>
        <taxon>Halobacterium</taxon>
        <taxon>Halobacterium salinarum NRC-34001</taxon>
    </lineage>
</organism>
<protein>
    <recommendedName>
        <fullName evidence="1">Transcription initiation factor IIB 1</fullName>
        <shortName evidence="1">TFIIB 1</shortName>
    </recommendedName>
</protein>
<dbReference type="EMBL" id="AE004437">
    <property type="protein sequence ID" value="AAG20319.1"/>
    <property type="molecule type" value="Genomic_DNA"/>
</dbReference>
<dbReference type="PIR" id="C84369">
    <property type="entry name" value="C84369"/>
</dbReference>
<dbReference type="RefSeq" id="WP_010903620.1">
    <property type="nucleotide sequence ID" value="NC_002607.1"/>
</dbReference>
<dbReference type="SMR" id="Q9HNA2"/>
<dbReference type="STRING" id="64091.VNG_2184G"/>
<dbReference type="PaxDb" id="64091-VNG_2184G"/>
<dbReference type="KEGG" id="hal:VNG_2184G"/>
<dbReference type="PATRIC" id="fig|64091.14.peg.1678"/>
<dbReference type="HOGENOM" id="CLU_043736_0_0_2"/>
<dbReference type="InParanoid" id="Q9HNA2"/>
<dbReference type="OrthoDB" id="7429at2157"/>
<dbReference type="PhylomeDB" id="Q9HNA2"/>
<dbReference type="Proteomes" id="UP000000554">
    <property type="component" value="Chromosome"/>
</dbReference>
<dbReference type="GO" id="GO:0097550">
    <property type="term" value="C:transcription preinitiation complex"/>
    <property type="evidence" value="ECO:0000318"/>
    <property type="project" value="GO_Central"/>
</dbReference>
<dbReference type="GO" id="GO:0003700">
    <property type="term" value="F:DNA-binding transcription factor activity"/>
    <property type="evidence" value="ECO:0007669"/>
    <property type="project" value="UniProtKB-UniRule"/>
</dbReference>
<dbReference type="GO" id="GO:0017025">
    <property type="term" value="F:TBP-class protein binding"/>
    <property type="evidence" value="ECO:0007669"/>
    <property type="project" value="InterPro"/>
</dbReference>
<dbReference type="GO" id="GO:0008270">
    <property type="term" value="F:zinc ion binding"/>
    <property type="evidence" value="ECO:0007669"/>
    <property type="project" value="UniProtKB-UniRule"/>
</dbReference>
<dbReference type="GO" id="GO:0006352">
    <property type="term" value="P:DNA-templated transcription initiation"/>
    <property type="evidence" value="ECO:0000318"/>
    <property type="project" value="GO_Central"/>
</dbReference>
<dbReference type="GO" id="GO:0070897">
    <property type="term" value="P:transcription preinitiation complex assembly"/>
    <property type="evidence" value="ECO:0007669"/>
    <property type="project" value="InterPro"/>
</dbReference>
<dbReference type="Gene3D" id="1.10.472.170">
    <property type="match status" value="1"/>
</dbReference>
<dbReference type="Gene3D" id="1.10.472.10">
    <property type="entry name" value="Cyclin-like"/>
    <property type="match status" value="1"/>
</dbReference>
<dbReference type="HAMAP" id="MF_00383">
    <property type="entry name" value="TF2B_arch"/>
    <property type="match status" value="1"/>
</dbReference>
<dbReference type="InterPro" id="IPR036915">
    <property type="entry name" value="Cyclin-like_sf"/>
</dbReference>
<dbReference type="InterPro" id="IPR000812">
    <property type="entry name" value="TFIIB"/>
</dbReference>
<dbReference type="InterPro" id="IPR023484">
    <property type="entry name" value="TFIIB_arc"/>
</dbReference>
<dbReference type="InterPro" id="IPR013150">
    <property type="entry name" value="TFIIB_cyclin"/>
</dbReference>
<dbReference type="InterPro" id="IPR013137">
    <property type="entry name" value="Znf_TFIIB"/>
</dbReference>
<dbReference type="PANTHER" id="PTHR11618:SF13">
    <property type="entry name" value="TRANSCRIPTION INITIATION FACTOR IIB"/>
    <property type="match status" value="1"/>
</dbReference>
<dbReference type="PANTHER" id="PTHR11618">
    <property type="entry name" value="TRANSCRIPTION INITIATION FACTOR IIB-RELATED"/>
    <property type="match status" value="1"/>
</dbReference>
<dbReference type="Pfam" id="PF00382">
    <property type="entry name" value="TFIIB"/>
    <property type="match status" value="2"/>
</dbReference>
<dbReference type="Pfam" id="PF08271">
    <property type="entry name" value="Zn_Ribbon_TF"/>
    <property type="match status" value="1"/>
</dbReference>
<dbReference type="PRINTS" id="PR00685">
    <property type="entry name" value="TIFACTORIIB"/>
</dbReference>
<dbReference type="SUPFAM" id="SSF47954">
    <property type="entry name" value="Cyclin-like"/>
    <property type="match status" value="2"/>
</dbReference>
<dbReference type="SUPFAM" id="SSF57783">
    <property type="entry name" value="Zinc beta-ribbon"/>
    <property type="match status" value="1"/>
</dbReference>
<dbReference type="PROSITE" id="PS51134">
    <property type="entry name" value="ZF_TFIIB"/>
    <property type="match status" value="1"/>
</dbReference>
<name>TF2B1_HALSA</name>
<proteinExistence type="inferred from homology"/>
<gene>
    <name evidence="1" type="primary">tfbA</name>
    <name type="ordered locus">VNG_2184G</name>
</gene>
<reference key="1">
    <citation type="journal article" date="2000" name="Proc. Natl. Acad. Sci. U.S.A.">
        <title>Genome sequence of Halobacterium species NRC-1.</title>
        <authorList>
            <person name="Ng W.V."/>
            <person name="Kennedy S.P."/>
            <person name="Mahairas G.G."/>
            <person name="Berquist B."/>
            <person name="Pan M."/>
            <person name="Shukla H.D."/>
            <person name="Lasky S.R."/>
            <person name="Baliga N.S."/>
            <person name="Thorsson V."/>
            <person name="Sbrogna J."/>
            <person name="Swartzell S."/>
            <person name="Weir D."/>
            <person name="Hall J."/>
            <person name="Dahl T.A."/>
            <person name="Welti R."/>
            <person name="Goo Y.A."/>
            <person name="Leithauser B."/>
            <person name="Keller K."/>
            <person name="Cruz R."/>
            <person name="Danson M.J."/>
            <person name="Hough D.W."/>
            <person name="Maddocks D.G."/>
            <person name="Jablonski P.E."/>
            <person name="Krebs M.P."/>
            <person name="Angevine C.M."/>
            <person name="Dale H."/>
            <person name="Isenbarger T.A."/>
            <person name="Peck R.F."/>
            <person name="Pohlschroder M."/>
            <person name="Spudich J.L."/>
            <person name="Jung K.-H."/>
            <person name="Alam M."/>
            <person name="Freitas T."/>
            <person name="Hou S."/>
            <person name="Daniels C.J."/>
            <person name="Dennis P.P."/>
            <person name="Omer A.D."/>
            <person name="Ebhardt H."/>
            <person name="Lowe T.M."/>
            <person name="Liang P."/>
            <person name="Riley M."/>
            <person name="Hood L."/>
            <person name="DasSarma S."/>
        </authorList>
    </citation>
    <scope>NUCLEOTIDE SEQUENCE [LARGE SCALE GENOMIC DNA]</scope>
    <source>
        <strain>ATCC 700922 / JCM 11081 / NRC-1</strain>
    </source>
</reference>
<sequence length="287" mass="31113">MQHPHRCPECDGTIRETDTEHVCADCGLVVTDAPIDHGPEWRTFSDDPDHAPERTGAPLTRSRHDRGLSTEIGYSARLTGRKRRKFARLRRQHKRATIPSKADYNRIYGFTEIRRLIGTFGIGTGLRDQACTLFASAQTAGLLHGRTIEGFAAAGVYATCRTNGVTRTLDEIAAAARATRPELTTAYDAMNRDLGLPTGPIDPREYLPRYADALSLPARIERQARELVAALETDGLVAGRNPSGVAAGCLYTAATETDHAVTQSAAAAVADVTPVTLRATYQNLTDA</sequence>
<comment type="function">
    <text evidence="1">Stabilizes TBP binding to an archaeal box-A promoter. Also responsible for recruiting RNA polymerase II to the pre-initiation complex (DNA-TBP-TFIIB).</text>
</comment>
<comment type="similarity">
    <text evidence="1">Belongs to the TFIIB family.</text>
</comment>
<accession>Q9HNA2</accession>
<feature type="chain" id="PRO_0000119311" description="Transcription initiation factor IIB 1">
    <location>
        <begin position="1"/>
        <end position="287"/>
    </location>
</feature>
<feature type="repeat" description="1">
    <location>
        <begin position="111"/>
        <end position="194"/>
    </location>
</feature>
<feature type="repeat" description="2">
    <location>
        <begin position="205"/>
        <end position="286"/>
    </location>
</feature>
<feature type="zinc finger region" description="TFIIB-type" evidence="2">
    <location>
        <begin position="3"/>
        <end position="31"/>
    </location>
</feature>
<feature type="region of interest" description="Disordered" evidence="3">
    <location>
        <begin position="40"/>
        <end position="63"/>
    </location>
</feature>
<feature type="compositionally biased region" description="Basic and acidic residues" evidence="3">
    <location>
        <begin position="40"/>
        <end position="53"/>
    </location>
</feature>
<feature type="binding site" evidence="2">
    <location>
        <position position="7"/>
    </location>
    <ligand>
        <name>Zn(2+)</name>
        <dbReference type="ChEBI" id="CHEBI:29105"/>
    </ligand>
</feature>
<feature type="binding site" evidence="2">
    <location>
        <position position="10"/>
    </location>
    <ligand>
        <name>Zn(2+)</name>
        <dbReference type="ChEBI" id="CHEBI:29105"/>
    </ligand>
</feature>
<feature type="binding site" evidence="2">
    <location>
        <position position="23"/>
    </location>
    <ligand>
        <name>Zn(2+)</name>
        <dbReference type="ChEBI" id="CHEBI:29105"/>
    </ligand>
</feature>
<feature type="binding site" evidence="2">
    <location>
        <position position="26"/>
    </location>
    <ligand>
        <name>Zn(2+)</name>
        <dbReference type="ChEBI" id="CHEBI:29105"/>
    </ligand>
</feature>